<sequence>MGIFSIANQHIRFAVKLASAIVLTLFVGFHFQLETPRWAVLTAAIVAAGPAFAAGGEPYAGAIRYRGMLRIIGTFIGCIAGLVIIIAMIRAPLLMILVCCIWAGFCTWISSLVRVENSYAWGLAGYTALIIVITIQPEPLLTPQFALERCSEIVVGIVCAIVADLIFSPRSIKQEVDRELDSLLVAQYQLMQLCIKHGEAEEVDKAWGNLVRRTTALEGMRSNLNMESSRWARANRRLKALNTLSLTLITQSCETYLIQNTRPELITETFREFFSTPVETAQDVHKQLKRLRRVIAWTGERETPVTIYSWAGAATRYLLIKRGVISNTKISATEEEILQGEPVVKAESAERHHAMVNFWRTTISCVLGTLFWLWTGWTSGSGAMVMIAVVTSLAMRLPNPRMVGIDFIYGTLAALPLGLLYFLVIIPNTQQSMLLLCLSLAVLGFFLGIEVQKRRLGSMGALASTINIIVLDNPMKFEFSLFLDSALGQIVGCVLAFTVILLVRDKSRDRTGRVLLNQFVSAAISAMTTNVVRRKENHLPALYQQLFLLMNKFPGDLPKFRLALTMIIAHQRLRDAPVPINDDLSAFHRQMRRTADKVISARSDDKRRKYFSQLLEELEIYQEKLRIWHAPPQVTEPVKRLSGMLHKYQHALTSS</sequence>
<feature type="chain" id="PRO_1000146739" description="p-hydroxybenzoic acid efflux pump subunit AaeB">
    <location>
        <begin position="1"/>
        <end position="655"/>
    </location>
</feature>
<feature type="transmembrane region" description="Helical" evidence="1">
    <location>
        <begin position="13"/>
        <end position="33"/>
    </location>
</feature>
<feature type="transmembrane region" description="Helical" evidence="1">
    <location>
        <begin position="38"/>
        <end position="58"/>
    </location>
</feature>
<feature type="transmembrane region" description="Helical" evidence="1">
    <location>
        <begin position="69"/>
        <end position="89"/>
    </location>
</feature>
<feature type="transmembrane region" description="Helical" evidence="1">
    <location>
        <begin position="93"/>
        <end position="113"/>
    </location>
</feature>
<feature type="transmembrane region" description="Helical" evidence="1">
    <location>
        <begin position="121"/>
        <end position="141"/>
    </location>
</feature>
<feature type="transmembrane region" description="Helical" evidence="1">
    <location>
        <begin position="152"/>
        <end position="172"/>
    </location>
</feature>
<feature type="transmembrane region" description="Helical" evidence="1">
    <location>
        <begin position="370"/>
        <end position="390"/>
    </location>
</feature>
<feature type="transmembrane region" description="Helical" evidence="1">
    <location>
        <begin position="407"/>
        <end position="427"/>
    </location>
</feature>
<feature type="transmembrane region" description="Helical" evidence="1">
    <location>
        <begin position="431"/>
        <end position="451"/>
    </location>
</feature>
<feature type="transmembrane region" description="Helical" evidence="1">
    <location>
        <begin position="481"/>
        <end position="501"/>
    </location>
</feature>
<accession>B7LRL5</accession>
<protein>
    <recommendedName>
        <fullName evidence="1">p-hydroxybenzoic acid efflux pump subunit AaeB</fullName>
        <shortName evidence="1">pHBA efflux pump protein B</shortName>
    </recommendedName>
</protein>
<evidence type="ECO:0000255" key="1">
    <source>
        <dbReference type="HAMAP-Rule" id="MF_01545"/>
    </source>
</evidence>
<reference key="1">
    <citation type="journal article" date="2009" name="PLoS Genet.">
        <title>Organised genome dynamics in the Escherichia coli species results in highly diverse adaptive paths.</title>
        <authorList>
            <person name="Touchon M."/>
            <person name="Hoede C."/>
            <person name="Tenaillon O."/>
            <person name="Barbe V."/>
            <person name="Baeriswyl S."/>
            <person name="Bidet P."/>
            <person name="Bingen E."/>
            <person name="Bonacorsi S."/>
            <person name="Bouchier C."/>
            <person name="Bouvet O."/>
            <person name="Calteau A."/>
            <person name="Chiapello H."/>
            <person name="Clermont O."/>
            <person name="Cruveiller S."/>
            <person name="Danchin A."/>
            <person name="Diard M."/>
            <person name="Dossat C."/>
            <person name="Karoui M.E."/>
            <person name="Frapy E."/>
            <person name="Garry L."/>
            <person name="Ghigo J.M."/>
            <person name="Gilles A.M."/>
            <person name="Johnson J."/>
            <person name="Le Bouguenec C."/>
            <person name="Lescat M."/>
            <person name="Mangenot S."/>
            <person name="Martinez-Jehanne V."/>
            <person name="Matic I."/>
            <person name="Nassif X."/>
            <person name="Oztas S."/>
            <person name="Petit M.A."/>
            <person name="Pichon C."/>
            <person name="Rouy Z."/>
            <person name="Ruf C.S."/>
            <person name="Schneider D."/>
            <person name="Tourret J."/>
            <person name="Vacherie B."/>
            <person name="Vallenet D."/>
            <person name="Medigue C."/>
            <person name="Rocha E.P.C."/>
            <person name="Denamur E."/>
        </authorList>
    </citation>
    <scope>NUCLEOTIDE SEQUENCE [LARGE SCALE GENOMIC DNA]</scope>
    <source>
        <strain>ATCC 35469 / DSM 13698 / BCRC 15582 / CCUG 18766 / IAM 14443 / JCM 21226 / LMG 7866 / NBRC 102419 / NCTC 12128 / CDC 0568-73</strain>
    </source>
</reference>
<gene>
    <name evidence="1" type="primary">aaeB</name>
    <name type="ordered locus">EFER_3218</name>
</gene>
<proteinExistence type="inferred from homology"/>
<keyword id="KW-0997">Cell inner membrane</keyword>
<keyword id="KW-1003">Cell membrane</keyword>
<keyword id="KW-0472">Membrane</keyword>
<keyword id="KW-0812">Transmembrane</keyword>
<keyword id="KW-1133">Transmembrane helix</keyword>
<keyword id="KW-0813">Transport</keyword>
<name>AAEB_ESCF3</name>
<comment type="function">
    <text evidence="1">Forms an efflux pump with AaeA. Could function as a metabolic relief valve, allowing to eliminate certain compounds when they accumulate to high levels in the cell.</text>
</comment>
<comment type="subcellular location">
    <subcellularLocation>
        <location evidence="1">Cell inner membrane</location>
        <topology evidence="1">Multi-pass membrane protein</topology>
    </subcellularLocation>
</comment>
<comment type="induction">
    <text evidence="1">Positively coregulated with aaeA and aaeX by AaeR.</text>
</comment>
<comment type="similarity">
    <text evidence="1">Belongs to the aromatic acid exporter ArAE (TC 2.A.85) family.</text>
</comment>
<dbReference type="EMBL" id="CU928158">
    <property type="protein sequence ID" value="CAQ90711.1"/>
    <property type="molecule type" value="Genomic_DNA"/>
</dbReference>
<dbReference type="RefSeq" id="WP_000510919.1">
    <property type="nucleotide sequence ID" value="NC_011740.1"/>
</dbReference>
<dbReference type="SMR" id="B7LRL5"/>
<dbReference type="GeneID" id="75060166"/>
<dbReference type="KEGG" id="efe:EFER_3218"/>
<dbReference type="HOGENOM" id="CLU_027647_0_0_6"/>
<dbReference type="OrthoDB" id="9807111at2"/>
<dbReference type="Proteomes" id="UP000000745">
    <property type="component" value="Chromosome"/>
</dbReference>
<dbReference type="GO" id="GO:0005886">
    <property type="term" value="C:plasma membrane"/>
    <property type="evidence" value="ECO:0007669"/>
    <property type="project" value="UniProtKB-SubCell"/>
</dbReference>
<dbReference type="GO" id="GO:0022857">
    <property type="term" value="F:transmembrane transporter activity"/>
    <property type="evidence" value="ECO:0007669"/>
    <property type="project" value="UniProtKB-UniRule"/>
</dbReference>
<dbReference type="GO" id="GO:0046942">
    <property type="term" value="P:carboxylic acid transport"/>
    <property type="evidence" value="ECO:0007669"/>
    <property type="project" value="InterPro"/>
</dbReference>
<dbReference type="HAMAP" id="MF_01545">
    <property type="entry name" value="AaeB"/>
    <property type="match status" value="1"/>
</dbReference>
<dbReference type="InterPro" id="IPR006726">
    <property type="entry name" value="PHBA_efflux_AaeB/fusaric-R"/>
</dbReference>
<dbReference type="InterPro" id="IPR023706">
    <property type="entry name" value="PHBA_efflux_pump_AaeB"/>
</dbReference>
<dbReference type="NCBIfam" id="NF007916">
    <property type="entry name" value="PRK10631.1"/>
    <property type="match status" value="1"/>
</dbReference>
<dbReference type="PANTHER" id="PTHR30509:SF9">
    <property type="entry name" value="MULTIDRUG RESISTANCE PROTEIN MDTO"/>
    <property type="match status" value="1"/>
</dbReference>
<dbReference type="PANTHER" id="PTHR30509">
    <property type="entry name" value="P-HYDROXYBENZOIC ACID EFFLUX PUMP SUBUNIT-RELATED"/>
    <property type="match status" value="1"/>
</dbReference>
<dbReference type="Pfam" id="PF04632">
    <property type="entry name" value="FUSC"/>
    <property type="match status" value="1"/>
</dbReference>
<organism>
    <name type="scientific">Escherichia fergusonii (strain ATCC 35469 / DSM 13698 / CCUG 18766 / IAM 14443 / JCM 21226 / LMG 7866 / NBRC 102419 / NCTC 12128 / CDC 0568-73)</name>
    <dbReference type="NCBI Taxonomy" id="585054"/>
    <lineage>
        <taxon>Bacteria</taxon>
        <taxon>Pseudomonadati</taxon>
        <taxon>Pseudomonadota</taxon>
        <taxon>Gammaproteobacteria</taxon>
        <taxon>Enterobacterales</taxon>
        <taxon>Enterobacteriaceae</taxon>
        <taxon>Escherichia</taxon>
    </lineage>
</organism>